<evidence type="ECO:0000255" key="1">
    <source>
        <dbReference type="HAMAP-Rule" id="MF_01318"/>
    </source>
</evidence>
<evidence type="ECO:0000305" key="2"/>
<accession>Q8ZTT4</accession>
<name>RL1_PYRAE</name>
<gene>
    <name evidence="1" type="primary">rpl1</name>
    <name type="ordered locus">PAE3106</name>
</gene>
<protein>
    <recommendedName>
        <fullName evidence="1">Large ribosomal subunit protein uL1</fullName>
    </recommendedName>
    <alternativeName>
        <fullName evidence="2">50S ribosomal protein L1</fullName>
    </alternativeName>
</protein>
<comment type="function">
    <text evidence="1">Binds directly to 23S rRNA. Probably involved in E site tRNA release.</text>
</comment>
<comment type="function">
    <text evidence="1">Protein L1 is also a translational repressor protein, it controls the translation of its operon by binding to its mRNA.</text>
</comment>
<comment type="subunit">
    <text evidence="1">Part of the 50S ribosomal subunit.</text>
</comment>
<comment type="similarity">
    <text evidence="1">Belongs to the universal ribosomal protein uL1 family.</text>
</comment>
<keyword id="KW-1185">Reference proteome</keyword>
<keyword id="KW-0678">Repressor</keyword>
<keyword id="KW-0687">Ribonucleoprotein</keyword>
<keyword id="KW-0689">Ribosomal protein</keyword>
<keyword id="KW-0694">RNA-binding</keyword>
<keyword id="KW-0699">rRNA-binding</keyword>
<keyword id="KW-0810">Translation regulation</keyword>
<keyword id="KW-0820">tRNA-binding</keyword>
<feature type="chain" id="PRO_0000125808" description="Large ribosomal subunit protein uL1">
    <location>
        <begin position="1"/>
        <end position="222"/>
    </location>
</feature>
<reference key="1">
    <citation type="journal article" date="2002" name="Proc. Natl. Acad. Sci. U.S.A.">
        <title>Genome sequence of the hyperthermophilic crenarchaeon Pyrobaculum aerophilum.</title>
        <authorList>
            <person name="Fitz-Gibbon S.T."/>
            <person name="Ladner H."/>
            <person name="Kim U.-J."/>
            <person name="Stetter K.O."/>
            <person name="Simon M.I."/>
            <person name="Miller J.H."/>
        </authorList>
    </citation>
    <scope>NUCLEOTIDE SEQUENCE [LARGE SCALE GENOMIC DNA]</scope>
    <source>
        <strain>ATCC 51768 / DSM 7523 / JCM 9630 / CIP 104966 / NBRC 100827 / IM2</strain>
    </source>
</reference>
<proteinExistence type="inferred from homology"/>
<dbReference type="EMBL" id="AE009441">
    <property type="protein sequence ID" value="AAL64675.1"/>
    <property type="molecule type" value="Genomic_DNA"/>
</dbReference>
<dbReference type="RefSeq" id="WP_011009143.1">
    <property type="nucleotide sequence ID" value="NC_003364.1"/>
</dbReference>
<dbReference type="SMR" id="Q8ZTT4"/>
<dbReference type="FunCoup" id="Q8ZTT4">
    <property type="interactions" value="158"/>
</dbReference>
<dbReference type="STRING" id="178306.PAE3106"/>
<dbReference type="EnsemblBacteria" id="AAL64675">
    <property type="protein sequence ID" value="AAL64675"/>
    <property type="gene ID" value="PAE3106"/>
</dbReference>
<dbReference type="GeneID" id="1463851"/>
<dbReference type="KEGG" id="pai:PAE3106"/>
<dbReference type="PATRIC" id="fig|178306.9.peg.2334"/>
<dbReference type="eggNOG" id="arCOG04289">
    <property type="taxonomic scope" value="Archaea"/>
</dbReference>
<dbReference type="HOGENOM" id="CLU_062853_4_0_2"/>
<dbReference type="InParanoid" id="Q8ZTT4"/>
<dbReference type="Proteomes" id="UP000002439">
    <property type="component" value="Chromosome"/>
</dbReference>
<dbReference type="GO" id="GO:0015934">
    <property type="term" value="C:large ribosomal subunit"/>
    <property type="evidence" value="ECO:0007669"/>
    <property type="project" value="InterPro"/>
</dbReference>
<dbReference type="GO" id="GO:0019843">
    <property type="term" value="F:rRNA binding"/>
    <property type="evidence" value="ECO:0007669"/>
    <property type="project" value="UniProtKB-UniRule"/>
</dbReference>
<dbReference type="GO" id="GO:0003735">
    <property type="term" value="F:structural constituent of ribosome"/>
    <property type="evidence" value="ECO:0007669"/>
    <property type="project" value="InterPro"/>
</dbReference>
<dbReference type="GO" id="GO:0000049">
    <property type="term" value="F:tRNA binding"/>
    <property type="evidence" value="ECO:0007669"/>
    <property type="project" value="UniProtKB-KW"/>
</dbReference>
<dbReference type="GO" id="GO:0006417">
    <property type="term" value="P:regulation of translation"/>
    <property type="evidence" value="ECO:0007669"/>
    <property type="project" value="UniProtKB-KW"/>
</dbReference>
<dbReference type="GO" id="GO:0006412">
    <property type="term" value="P:translation"/>
    <property type="evidence" value="ECO:0007669"/>
    <property type="project" value="UniProtKB-UniRule"/>
</dbReference>
<dbReference type="CDD" id="cd00403">
    <property type="entry name" value="Ribosomal_L1"/>
    <property type="match status" value="1"/>
</dbReference>
<dbReference type="FunFam" id="3.40.50.790:FF:000005">
    <property type="entry name" value="50S ribosomal protein L1"/>
    <property type="match status" value="1"/>
</dbReference>
<dbReference type="Gene3D" id="3.30.190.20">
    <property type="match status" value="1"/>
</dbReference>
<dbReference type="Gene3D" id="3.40.50.790">
    <property type="match status" value="1"/>
</dbReference>
<dbReference type="HAMAP" id="MF_01318_A">
    <property type="entry name" value="Ribosomal_uL1_A"/>
    <property type="match status" value="1"/>
</dbReference>
<dbReference type="InterPro" id="IPR002143">
    <property type="entry name" value="Ribosomal_uL1"/>
</dbReference>
<dbReference type="InterPro" id="IPR023674">
    <property type="entry name" value="Ribosomal_uL1-like"/>
</dbReference>
<dbReference type="InterPro" id="IPR028364">
    <property type="entry name" value="Ribosomal_uL1/biogenesis"/>
</dbReference>
<dbReference type="InterPro" id="IPR016095">
    <property type="entry name" value="Ribosomal_uL1_3-a/b-sand"/>
</dbReference>
<dbReference type="InterPro" id="IPR023669">
    <property type="entry name" value="Ribosomal_uL1_arc"/>
</dbReference>
<dbReference type="InterPro" id="IPR023673">
    <property type="entry name" value="Ribosomal_uL1_CS"/>
</dbReference>
<dbReference type="NCBIfam" id="NF003244">
    <property type="entry name" value="PRK04203.1"/>
    <property type="match status" value="1"/>
</dbReference>
<dbReference type="PANTHER" id="PTHR36427">
    <property type="entry name" value="54S RIBOSOMAL PROTEIN L1, MITOCHONDRIAL"/>
    <property type="match status" value="1"/>
</dbReference>
<dbReference type="PANTHER" id="PTHR36427:SF3">
    <property type="entry name" value="LARGE RIBOSOMAL SUBUNIT PROTEIN UL1M"/>
    <property type="match status" value="1"/>
</dbReference>
<dbReference type="Pfam" id="PF00687">
    <property type="entry name" value="Ribosomal_L1"/>
    <property type="match status" value="1"/>
</dbReference>
<dbReference type="PIRSF" id="PIRSF002155">
    <property type="entry name" value="Ribosomal_L1"/>
    <property type="match status" value="1"/>
</dbReference>
<dbReference type="SUPFAM" id="SSF56808">
    <property type="entry name" value="Ribosomal protein L1"/>
    <property type="match status" value="1"/>
</dbReference>
<dbReference type="PROSITE" id="PS01199">
    <property type="entry name" value="RIBOSOMAL_L1"/>
    <property type="match status" value="1"/>
</dbReference>
<sequence length="222" mass="24706">MSAVINKETLQAKIAEALKAGKPRRFKQSVELIVVLKGVDLSKPENRINLLVELPHPPKPNKIAAFAHGAFEVSAKNAGVDSIITRDQVEGLSGNKRAIRKLAKQYDFFIAPPDLMPLLGRVVGPIFGPRGKMPEVVPPNVDVKSVVERLRKAVRVRFRNEPVVKVRIGSEGQSPKEILENALVVLEEVNRKFPLRQYLKDLYFKKTMGPPVKVRAVEALVK</sequence>
<organism>
    <name type="scientific">Pyrobaculum aerophilum (strain ATCC 51768 / DSM 7523 / JCM 9630 / CIP 104966 / NBRC 100827 / IM2)</name>
    <dbReference type="NCBI Taxonomy" id="178306"/>
    <lineage>
        <taxon>Archaea</taxon>
        <taxon>Thermoproteota</taxon>
        <taxon>Thermoprotei</taxon>
        <taxon>Thermoproteales</taxon>
        <taxon>Thermoproteaceae</taxon>
        <taxon>Pyrobaculum</taxon>
    </lineage>
</organism>